<proteinExistence type="inferred from homology"/>
<comment type="function">
    <text evidence="1">Positively regulates the transcription of the maltose regulon whose gene products are responsible for uptake and catabolism of malto-oligosaccharides. Specifically binds to the promoter region of its target genes, recognizing a short DNA motif called the MalT box.</text>
</comment>
<comment type="activity regulation">
    <text evidence="1">Activated by ATP and maltotriose, which are both required for DNA binding.</text>
</comment>
<comment type="subunit">
    <text evidence="1">Monomer in solution. Oligomerizes to an active state in the presence of the positive effectors ATP and maltotriose.</text>
</comment>
<comment type="similarity">
    <text evidence="1">Belongs to the MalT family.</text>
</comment>
<accession>Q5PM00</accession>
<dbReference type="EMBL" id="CP000026">
    <property type="protein sequence ID" value="AAV79193.1"/>
    <property type="molecule type" value="Genomic_DNA"/>
</dbReference>
<dbReference type="RefSeq" id="WP_000907030.1">
    <property type="nucleotide sequence ID" value="NC_006511.1"/>
</dbReference>
<dbReference type="SMR" id="Q5PM00"/>
<dbReference type="KEGG" id="spt:SPA3380"/>
<dbReference type="HOGENOM" id="CLU_006325_3_0_6"/>
<dbReference type="Proteomes" id="UP000008185">
    <property type="component" value="Chromosome"/>
</dbReference>
<dbReference type="GO" id="GO:0005524">
    <property type="term" value="F:ATP binding"/>
    <property type="evidence" value="ECO:0007669"/>
    <property type="project" value="UniProtKB-UniRule"/>
</dbReference>
<dbReference type="GO" id="GO:0003677">
    <property type="term" value="F:DNA binding"/>
    <property type="evidence" value="ECO:0007669"/>
    <property type="project" value="UniProtKB-KW"/>
</dbReference>
<dbReference type="GO" id="GO:0003700">
    <property type="term" value="F:DNA-binding transcription factor activity"/>
    <property type="evidence" value="ECO:0007669"/>
    <property type="project" value="UniProtKB-UniRule"/>
</dbReference>
<dbReference type="GO" id="GO:0045913">
    <property type="term" value="P:positive regulation of carbohydrate metabolic process"/>
    <property type="evidence" value="ECO:0007669"/>
    <property type="project" value="UniProtKB-UniRule"/>
</dbReference>
<dbReference type="GO" id="GO:0045893">
    <property type="term" value="P:positive regulation of DNA-templated transcription"/>
    <property type="evidence" value="ECO:0007669"/>
    <property type="project" value="UniProtKB-UniRule"/>
</dbReference>
<dbReference type="CDD" id="cd06170">
    <property type="entry name" value="LuxR_C_like"/>
    <property type="match status" value="1"/>
</dbReference>
<dbReference type="FunFam" id="1.10.10.10:FF:000115">
    <property type="entry name" value="HTH-type transcriptional regulator MalT"/>
    <property type="match status" value="1"/>
</dbReference>
<dbReference type="Gene3D" id="1.25.40.10">
    <property type="entry name" value="Tetratricopeptide repeat domain"/>
    <property type="match status" value="1"/>
</dbReference>
<dbReference type="Gene3D" id="1.10.10.10">
    <property type="entry name" value="Winged helix-like DNA-binding domain superfamily/Winged helix DNA-binding domain"/>
    <property type="match status" value="1"/>
</dbReference>
<dbReference type="HAMAP" id="MF_01247">
    <property type="entry name" value="HTH_type_MalT"/>
    <property type="match status" value="1"/>
</dbReference>
<dbReference type="InterPro" id="IPR027417">
    <property type="entry name" value="P-loop_NTPase"/>
</dbReference>
<dbReference type="InterPro" id="IPR016032">
    <property type="entry name" value="Sig_transdc_resp-reg_C-effctor"/>
</dbReference>
<dbReference type="InterPro" id="IPR011990">
    <property type="entry name" value="TPR-like_helical_dom_sf"/>
</dbReference>
<dbReference type="InterPro" id="IPR041617">
    <property type="entry name" value="TPR_MalT"/>
</dbReference>
<dbReference type="InterPro" id="IPR023768">
    <property type="entry name" value="Tscrpt_reg_HTH_MalT"/>
</dbReference>
<dbReference type="InterPro" id="IPR000792">
    <property type="entry name" value="Tscrpt_reg_LuxR_C"/>
</dbReference>
<dbReference type="InterPro" id="IPR036388">
    <property type="entry name" value="WH-like_DNA-bd_sf"/>
</dbReference>
<dbReference type="NCBIfam" id="NF003420">
    <property type="entry name" value="PRK04841.1"/>
    <property type="match status" value="1"/>
</dbReference>
<dbReference type="PANTHER" id="PTHR44688">
    <property type="entry name" value="DNA-BINDING TRANSCRIPTIONAL ACTIVATOR DEVR_DOSR"/>
    <property type="match status" value="1"/>
</dbReference>
<dbReference type="PANTHER" id="PTHR44688:SF16">
    <property type="entry name" value="DNA-BINDING TRANSCRIPTIONAL ACTIVATOR DEVR_DOSR"/>
    <property type="match status" value="1"/>
</dbReference>
<dbReference type="Pfam" id="PF00196">
    <property type="entry name" value="GerE"/>
    <property type="match status" value="1"/>
</dbReference>
<dbReference type="Pfam" id="PF17874">
    <property type="entry name" value="TPR_MalT"/>
    <property type="match status" value="1"/>
</dbReference>
<dbReference type="PRINTS" id="PR00038">
    <property type="entry name" value="HTHLUXR"/>
</dbReference>
<dbReference type="SMART" id="SM00421">
    <property type="entry name" value="HTH_LUXR"/>
    <property type="match status" value="1"/>
</dbReference>
<dbReference type="SUPFAM" id="SSF46894">
    <property type="entry name" value="C-terminal effector domain of the bipartite response regulators"/>
    <property type="match status" value="1"/>
</dbReference>
<dbReference type="SUPFAM" id="SSF52540">
    <property type="entry name" value="P-loop containing nucleoside triphosphate hydrolases"/>
    <property type="match status" value="1"/>
</dbReference>
<dbReference type="SUPFAM" id="SSF48452">
    <property type="entry name" value="TPR-like"/>
    <property type="match status" value="1"/>
</dbReference>
<dbReference type="PROSITE" id="PS00622">
    <property type="entry name" value="HTH_LUXR_1"/>
    <property type="match status" value="1"/>
</dbReference>
<dbReference type="PROSITE" id="PS50043">
    <property type="entry name" value="HTH_LUXR_2"/>
    <property type="match status" value="1"/>
</dbReference>
<evidence type="ECO:0000255" key="1">
    <source>
        <dbReference type="HAMAP-Rule" id="MF_01247"/>
    </source>
</evidence>
<sequence>MLIPSKLSRPVRLDHTVVRERLLAKLSGANNFRLALVTSPAGYGKTTLVSQWAAGKNELGWYSLDEGDNQQERFASYLIAAIQQATGGHCSTSEAMAQKRQYASLTSLFAQLFIELAQWHRPLYLVIDDYHLITNPVIHDAMRFFLRHQPENFTLVVLSRNLPQLGIANLRVRDQLLEIGSQQLAFNHQEAKQFFDRRLSSPIEAAESSRMCDDVAGWATALQLIALSARQNHTSAHHSARRLAGINASHLSDYLVDEVLDNVDVSTRHFLLKSAILRSMNDALIVRVTGEENGQMRLEEIERQGLFLQRMDDTGEWFSYHPLFGSFLRQRCQWELAAELPEIHRAAAESWMEQGFPSEAIHHALAAGDAQMLRDILLNHAWGLFNHSELALLEESLKALPWESLLENPRLVLLQAWLMQSQHRYSEVNTLLARAEQEIKGVMDGTLHAEFNALRAQVAINDGNPEEAERLAKLALDELPLAWFYSRIVATSVHGEVLHCKGDLSQSLSLMQQTEQMARHHDVWHYALWSLIQQSEIQFAQGFLQAAWETQERAFQLIKEQHLEQLPMHEFLVRIRAQLLWAWARLDEAEASARSGIAVLSTFQPQQQLQCLTLLVQCSLARGDLDNARSQLNRLENLLGNGRYHCDWISNADKVRVIYWQLTGDKKSAANWLRHTPKPAFANNHFLQGQWRNIARAQILLGEFEPAEIVLEELNENARSLRLMSDLNRNLLLLNQLYWQSGRKNDAQRVLLDALQLANRTGFISHFVIEGEAMAQQLRQLIQLNTLPEMEQHRAQRILREINQHHRHKFAHFDEGFVERLLNHPDVPELIRTSPLTQREWQVLGLIYSGYSNEQIAGELAVAATTIKTHIRNLYQKLGVAHRQDAVQHAQQLLKMMGYGV</sequence>
<keyword id="KW-0010">Activator</keyword>
<keyword id="KW-0067">ATP-binding</keyword>
<keyword id="KW-0119">Carbohydrate metabolism</keyword>
<keyword id="KW-0238">DNA-binding</keyword>
<keyword id="KW-0547">Nucleotide-binding</keyword>
<keyword id="KW-0804">Transcription</keyword>
<keyword id="KW-0805">Transcription regulation</keyword>
<protein>
    <recommendedName>
        <fullName evidence="1">HTH-type transcriptional regulator MalT</fullName>
    </recommendedName>
    <alternativeName>
        <fullName evidence="1">ATP-dependent transcriptional activator MalT</fullName>
    </alternativeName>
</protein>
<organism>
    <name type="scientific">Salmonella paratyphi A (strain ATCC 9150 / SARB42)</name>
    <dbReference type="NCBI Taxonomy" id="295319"/>
    <lineage>
        <taxon>Bacteria</taxon>
        <taxon>Pseudomonadati</taxon>
        <taxon>Pseudomonadota</taxon>
        <taxon>Gammaproteobacteria</taxon>
        <taxon>Enterobacterales</taxon>
        <taxon>Enterobacteriaceae</taxon>
        <taxon>Salmonella</taxon>
    </lineage>
</organism>
<name>MALT_SALPA</name>
<reference key="1">
    <citation type="journal article" date="2004" name="Nat. Genet.">
        <title>Comparison of genome degradation in Paratyphi A and Typhi, human-restricted serovars of Salmonella enterica that cause typhoid.</title>
        <authorList>
            <person name="McClelland M."/>
            <person name="Sanderson K.E."/>
            <person name="Clifton S.W."/>
            <person name="Latreille P."/>
            <person name="Porwollik S."/>
            <person name="Sabo A."/>
            <person name="Meyer R."/>
            <person name="Bieri T."/>
            <person name="Ozersky P."/>
            <person name="McLellan M."/>
            <person name="Harkins C.R."/>
            <person name="Wang C."/>
            <person name="Nguyen C."/>
            <person name="Berghoff A."/>
            <person name="Elliott G."/>
            <person name="Kohlberg S."/>
            <person name="Strong C."/>
            <person name="Du F."/>
            <person name="Carter J."/>
            <person name="Kremizki C."/>
            <person name="Layman D."/>
            <person name="Leonard S."/>
            <person name="Sun H."/>
            <person name="Fulton L."/>
            <person name="Nash W."/>
            <person name="Miner T."/>
            <person name="Minx P."/>
            <person name="Delehaunty K."/>
            <person name="Fronick C."/>
            <person name="Magrini V."/>
            <person name="Nhan M."/>
            <person name="Warren W."/>
            <person name="Florea L."/>
            <person name="Spieth J."/>
            <person name="Wilson R.K."/>
        </authorList>
    </citation>
    <scope>NUCLEOTIDE SEQUENCE [LARGE SCALE GENOMIC DNA]</scope>
    <source>
        <strain>ATCC 9150 / SARB42</strain>
    </source>
</reference>
<gene>
    <name evidence="1" type="primary">malT</name>
    <name type="ordered locus">SPA3380</name>
</gene>
<feature type="chain" id="PRO_1000085776" description="HTH-type transcriptional regulator MalT">
    <location>
        <begin position="1"/>
        <end position="901"/>
    </location>
</feature>
<feature type="domain" description="HTH luxR-type" evidence="1">
    <location>
        <begin position="829"/>
        <end position="894"/>
    </location>
</feature>
<feature type="DNA-binding region" description="H-T-H motif" evidence="1">
    <location>
        <begin position="853"/>
        <end position="872"/>
    </location>
</feature>
<feature type="binding site" evidence="1">
    <location>
        <begin position="39"/>
        <end position="46"/>
    </location>
    <ligand>
        <name>ATP</name>
        <dbReference type="ChEBI" id="CHEBI:30616"/>
    </ligand>
</feature>